<protein>
    <recommendedName>
        <fullName evidence="1">Cell division inhibitor SulA</fullName>
    </recommendedName>
</protein>
<sequence>MSTQSVSSHNIESSSFSANQHAAEPSVATGGIISEIVYNADQPIVTHLLLPLLQQLGTQSRWLLWLSPQQRLSRPWVQQSGLPLDKMVQLHHINPLFTVDAMERALLTGNYSAVLCWLPHELTEEEKVRLRHAAQAGNTYGFIMRPESAGDDAYRLFPSLKIHSTLYH</sequence>
<accession>Q6D6D3</accession>
<comment type="function">
    <text evidence="1">Component of the SOS system and an inhibitor of cell division. Accumulation of SulA causes rapid cessation of cell division and the appearance of long, non-septate filaments. In the presence of GTP, binds a polymerization-competent form of FtsZ in a 1:1 ratio, thus inhibiting FtsZ polymerization and therefore preventing it from participating in the assembly of the Z ring. This mechanism prevents the premature segregation of damaged DNA to daughter cells during cell division.</text>
</comment>
<comment type="subunit">
    <text evidence="1">Interacts with FtsZ.</text>
</comment>
<comment type="induction">
    <text evidence="1">By DNA damage, as part of the SOS response.</text>
</comment>
<comment type="PTM">
    <text evidence="1">Is rapidly cleaved and degraded by the Lon protease once DNA damage is repaired.</text>
</comment>
<comment type="similarity">
    <text evidence="1">Belongs to the SulA family.</text>
</comment>
<evidence type="ECO:0000255" key="1">
    <source>
        <dbReference type="HAMAP-Rule" id="MF_01179"/>
    </source>
</evidence>
<evidence type="ECO:0000256" key="2">
    <source>
        <dbReference type="SAM" id="MobiDB-lite"/>
    </source>
</evidence>
<feature type="chain" id="PRO_0000343957" description="Cell division inhibitor SulA">
    <location>
        <begin position="1"/>
        <end position="168"/>
    </location>
</feature>
<feature type="region of interest" description="Disordered" evidence="2">
    <location>
        <begin position="1"/>
        <end position="20"/>
    </location>
</feature>
<feature type="region of interest" description="FtsZ binding" evidence="1">
    <location>
        <begin position="105"/>
        <end position="111"/>
    </location>
</feature>
<feature type="region of interest" description="Lon protease binding" evidence="1">
    <location>
        <begin position="161"/>
        <end position="168"/>
    </location>
</feature>
<feature type="site" description="Essential for degradation by Lon protease" evidence="1">
    <location>
        <position position="168"/>
    </location>
</feature>
<proteinExistence type="inferred from homology"/>
<keyword id="KW-0131">Cell cycle</keyword>
<keyword id="KW-0132">Cell division</keyword>
<keyword id="KW-0227">DNA damage</keyword>
<keyword id="KW-1185">Reference proteome</keyword>
<keyword id="KW-0717">Septation</keyword>
<keyword id="KW-0742">SOS response</keyword>
<gene>
    <name evidence="1" type="primary">sulA</name>
    <name type="ordered locus">ECA1752</name>
</gene>
<reference key="1">
    <citation type="journal article" date="2004" name="Proc. Natl. Acad. Sci. U.S.A.">
        <title>Genome sequence of the enterobacterial phytopathogen Erwinia carotovora subsp. atroseptica and characterization of virulence factors.</title>
        <authorList>
            <person name="Bell K.S."/>
            <person name="Sebaihia M."/>
            <person name="Pritchard L."/>
            <person name="Holden M.T.G."/>
            <person name="Hyman L.J."/>
            <person name="Holeva M.C."/>
            <person name="Thomson N.R."/>
            <person name="Bentley S.D."/>
            <person name="Churcher L.J.C."/>
            <person name="Mungall K."/>
            <person name="Atkin R."/>
            <person name="Bason N."/>
            <person name="Brooks K."/>
            <person name="Chillingworth T."/>
            <person name="Clark K."/>
            <person name="Doggett J."/>
            <person name="Fraser A."/>
            <person name="Hance Z."/>
            <person name="Hauser H."/>
            <person name="Jagels K."/>
            <person name="Moule S."/>
            <person name="Norbertczak H."/>
            <person name="Ormond D."/>
            <person name="Price C."/>
            <person name="Quail M.A."/>
            <person name="Sanders M."/>
            <person name="Walker D."/>
            <person name="Whitehead S."/>
            <person name="Salmond G.P.C."/>
            <person name="Birch P.R.J."/>
            <person name="Parkhill J."/>
            <person name="Toth I.K."/>
        </authorList>
    </citation>
    <scope>NUCLEOTIDE SEQUENCE [LARGE SCALE GENOMIC DNA]</scope>
    <source>
        <strain>SCRI 1043 / ATCC BAA-672</strain>
    </source>
</reference>
<organism>
    <name type="scientific">Pectobacterium atrosepticum (strain SCRI 1043 / ATCC BAA-672)</name>
    <name type="common">Erwinia carotovora subsp. atroseptica</name>
    <dbReference type="NCBI Taxonomy" id="218491"/>
    <lineage>
        <taxon>Bacteria</taxon>
        <taxon>Pseudomonadati</taxon>
        <taxon>Pseudomonadota</taxon>
        <taxon>Gammaproteobacteria</taxon>
        <taxon>Enterobacterales</taxon>
        <taxon>Pectobacteriaceae</taxon>
        <taxon>Pectobacterium</taxon>
    </lineage>
</organism>
<name>SULA_PECAS</name>
<dbReference type="EMBL" id="BX950851">
    <property type="protein sequence ID" value="CAG74657.1"/>
    <property type="molecule type" value="Genomic_DNA"/>
</dbReference>
<dbReference type="RefSeq" id="WP_011093328.1">
    <property type="nucleotide sequence ID" value="NC_004547.2"/>
</dbReference>
<dbReference type="SMR" id="Q6D6D3"/>
<dbReference type="STRING" id="218491.ECA1752"/>
<dbReference type="DNASU" id="2884331"/>
<dbReference type="GeneID" id="57209535"/>
<dbReference type="KEGG" id="eca:ECA1752"/>
<dbReference type="PATRIC" id="fig|218491.5.peg.1779"/>
<dbReference type="eggNOG" id="COG5404">
    <property type="taxonomic scope" value="Bacteria"/>
</dbReference>
<dbReference type="HOGENOM" id="CLU_118972_1_0_6"/>
<dbReference type="OrthoDB" id="6464784at2"/>
<dbReference type="Proteomes" id="UP000007966">
    <property type="component" value="Chromosome"/>
</dbReference>
<dbReference type="GO" id="GO:0000917">
    <property type="term" value="P:division septum assembly"/>
    <property type="evidence" value="ECO:0007669"/>
    <property type="project" value="UniProtKB-KW"/>
</dbReference>
<dbReference type="GO" id="GO:0006281">
    <property type="term" value="P:DNA repair"/>
    <property type="evidence" value="ECO:0007669"/>
    <property type="project" value="TreeGrafter"/>
</dbReference>
<dbReference type="GO" id="GO:0051782">
    <property type="term" value="P:negative regulation of cell division"/>
    <property type="evidence" value="ECO:0007669"/>
    <property type="project" value="UniProtKB-UniRule"/>
</dbReference>
<dbReference type="GO" id="GO:0009432">
    <property type="term" value="P:SOS response"/>
    <property type="evidence" value="ECO:0007669"/>
    <property type="project" value="UniProtKB-UniRule"/>
</dbReference>
<dbReference type="Gene3D" id="3.40.50.300">
    <property type="entry name" value="P-loop containing nucleotide triphosphate hydrolases"/>
    <property type="match status" value="1"/>
</dbReference>
<dbReference type="HAMAP" id="MF_01179">
    <property type="entry name" value="SulA"/>
    <property type="match status" value="1"/>
</dbReference>
<dbReference type="InterPro" id="IPR004596">
    <property type="entry name" value="Cell_div_suppressor_SulA"/>
</dbReference>
<dbReference type="InterPro" id="IPR027417">
    <property type="entry name" value="P-loop_NTPase"/>
</dbReference>
<dbReference type="InterPro" id="IPR050356">
    <property type="entry name" value="SulA_CellDiv_inhibitor"/>
</dbReference>
<dbReference type="InterPro" id="IPR047696">
    <property type="entry name" value="SulA_enterobact"/>
</dbReference>
<dbReference type="NCBIfam" id="NF007892">
    <property type="entry name" value="PRK10595.1"/>
    <property type="match status" value="1"/>
</dbReference>
<dbReference type="NCBIfam" id="TIGR00623">
    <property type="entry name" value="SOS_SulA_coli"/>
    <property type="match status" value="1"/>
</dbReference>
<dbReference type="PANTHER" id="PTHR35369">
    <property type="entry name" value="BLR3025 PROTEIN-RELATED"/>
    <property type="match status" value="1"/>
</dbReference>
<dbReference type="PANTHER" id="PTHR35369:SF4">
    <property type="entry name" value="CELL DIVISION INHIBITOR SULA"/>
    <property type="match status" value="1"/>
</dbReference>
<dbReference type="Pfam" id="PF03846">
    <property type="entry name" value="SulA"/>
    <property type="match status" value="1"/>
</dbReference>
<dbReference type="PIRSF" id="PIRSF003093">
    <property type="entry name" value="SulA"/>
    <property type="match status" value="1"/>
</dbReference>
<dbReference type="SUPFAM" id="SSF52540">
    <property type="entry name" value="P-loop containing nucleoside triphosphate hydrolases"/>
    <property type="match status" value="1"/>
</dbReference>